<name>RP30_MONPV</name>
<protein>
    <recommendedName>
        <fullName>DNA-directed RNA polymerase 30 kDa polypeptide</fullName>
        <ecNumber>2.7.7.6</ecNumber>
    </recommendedName>
</protein>
<organism evidence="5 6">
    <name type="scientific">Monkeypox virus</name>
    <dbReference type="NCBI Taxonomy" id="10244"/>
    <lineage>
        <taxon>Viruses</taxon>
        <taxon>Varidnaviria</taxon>
        <taxon>Bamfordvirae</taxon>
        <taxon>Nucleocytoviricota</taxon>
        <taxon>Pokkesviricetes</taxon>
        <taxon>Chitovirales</taxon>
        <taxon>Poxviridae</taxon>
        <taxon>Chordopoxvirinae</taxon>
        <taxon>Orthopoxvirus</taxon>
    </lineage>
</organism>
<dbReference type="EC" id="2.7.7.6"/>
<dbReference type="EMBL" id="MT903340">
    <property type="protein sequence ID" value="QNP12922.1"/>
    <property type="molecule type" value="Genomic_DNA"/>
</dbReference>
<dbReference type="RefSeq" id="YP_010377049.1">
    <property type="nucleotide sequence ID" value="NC_063383.1"/>
</dbReference>
<dbReference type="SMR" id="A0A7H0DN39"/>
<dbReference type="GeneID" id="72551462"/>
<dbReference type="Proteomes" id="UP000516359">
    <property type="component" value="Genome"/>
</dbReference>
<dbReference type="GO" id="GO:0000428">
    <property type="term" value="C:DNA-directed RNA polymerase complex"/>
    <property type="evidence" value="ECO:0007669"/>
    <property type="project" value="UniProtKB-KW"/>
</dbReference>
<dbReference type="GO" id="GO:0030430">
    <property type="term" value="C:host cell cytoplasm"/>
    <property type="evidence" value="ECO:0007669"/>
    <property type="project" value="UniProtKB-SubCell"/>
</dbReference>
<dbReference type="GO" id="GO:0044423">
    <property type="term" value="C:virion component"/>
    <property type="evidence" value="ECO:0007669"/>
    <property type="project" value="UniProtKB-KW"/>
</dbReference>
<dbReference type="GO" id="GO:0003677">
    <property type="term" value="F:DNA binding"/>
    <property type="evidence" value="ECO:0007669"/>
    <property type="project" value="InterPro"/>
</dbReference>
<dbReference type="GO" id="GO:0003899">
    <property type="term" value="F:DNA-directed RNA polymerase activity"/>
    <property type="evidence" value="ECO:0007669"/>
    <property type="project" value="InterPro"/>
</dbReference>
<dbReference type="GO" id="GO:0008270">
    <property type="term" value="F:zinc ion binding"/>
    <property type="evidence" value="ECO:0007669"/>
    <property type="project" value="UniProtKB-KW"/>
</dbReference>
<dbReference type="GO" id="GO:0006351">
    <property type="term" value="P:DNA-templated transcription"/>
    <property type="evidence" value="ECO:0007669"/>
    <property type="project" value="InterPro"/>
</dbReference>
<dbReference type="Gene3D" id="2.20.25.10">
    <property type="match status" value="1"/>
</dbReference>
<dbReference type="InterPro" id="IPR009162">
    <property type="entry name" value="RNA_pol_30_chordopoxvir-type"/>
</dbReference>
<dbReference type="InterPro" id="IPR024394">
    <property type="entry name" value="RNA_pol_30_chordopoxvir-type_N"/>
</dbReference>
<dbReference type="InterPro" id="IPR001222">
    <property type="entry name" value="Znf_TFIIS"/>
</dbReference>
<dbReference type="Pfam" id="PF12410">
    <property type="entry name" value="rpo30_N"/>
    <property type="match status" value="1"/>
</dbReference>
<dbReference type="Pfam" id="PF01096">
    <property type="entry name" value="Zn_ribbon_TFIIS"/>
    <property type="match status" value="1"/>
</dbReference>
<dbReference type="PIRSF" id="PIRSF000745">
    <property type="entry name" value="VAC_RPO30"/>
    <property type="match status" value="1"/>
</dbReference>
<dbReference type="SMART" id="SM00440">
    <property type="entry name" value="ZnF_C2C2"/>
    <property type="match status" value="1"/>
</dbReference>
<dbReference type="SUPFAM" id="SSF57783">
    <property type="entry name" value="Zinc beta-ribbon"/>
    <property type="match status" value="1"/>
</dbReference>
<dbReference type="PROSITE" id="PS00466">
    <property type="entry name" value="ZF_TFIIS_1"/>
    <property type="match status" value="1"/>
</dbReference>
<dbReference type="PROSITE" id="PS51133">
    <property type="entry name" value="ZF_TFIIS_2"/>
    <property type="match status" value="1"/>
</dbReference>
<sequence length="259" mass="29861">MENVYISSYSSNEQISMAVVTTDIRELLSQYVDDANLENLIEWAMEKSSKYYIKNIGNTKSNIEETKFESKNNIGIEYSKDSKNKLSYRNKPSIATHLEYKTLCDMIKGTSGTEKEFLRYLLFGIKCIKKGVEYNIDKIKDVSYNDYFNVLDEKYNTPCPNCKSRNTTPMMIQTRAADEPPLVRHACRDCKQHFKPPKFRAFRNLNVTTQSIHENKEITEILPDNNPSPPESPEPASPIDDGLIRATFDRNDEPPEDDE</sequence>
<feature type="chain" id="PRO_0000457705" description="DNA-directed RNA polymerase 30 kDa polypeptide">
    <location>
        <begin position="1"/>
        <end position="259"/>
    </location>
</feature>
<feature type="zinc finger region" description="TFIIS-type" evidence="1">
    <location>
        <begin position="155"/>
        <end position="195"/>
    </location>
</feature>
<feature type="region of interest" description="Disordered" evidence="3">
    <location>
        <begin position="220"/>
        <end position="259"/>
    </location>
</feature>
<feature type="compositionally biased region" description="Pro residues" evidence="3">
    <location>
        <begin position="226"/>
        <end position="236"/>
    </location>
</feature>
<feature type="binding site" evidence="1">
    <location>
        <position position="159"/>
    </location>
    <ligand>
        <name>Zn(2+)</name>
        <dbReference type="ChEBI" id="CHEBI:29105"/>
    </ligand>
</feature>
<feature type="binding site" evidence="1">
    <location>
        <position position="162"/>
    </location>
    <ligand>
        <name>Zn(2+)</name>
        <dbReference type="ChEBI" id="CHEBI:29105"/>
    </ligand>
</feature>
<feature type="binding site" evidence="1">
    <location>
        <position position="187"/>
    </location>
    <ligand>
        <name>Zn(2+)</name>
        <dbReference type="ChEBI" id="CHEBI:29105"/>
    </ligand>
</feature>
<feature type="binding site" evidence="1">
    <location>
        <position position="190"/>
    </location>
    <ligand>
        <name>Zn(2+)</name>
        <dbReference type="ChEBI" id="CHEBI:29105"/>
    </ligand>
</feature>
<proteinExistence type="inferred from homology"/>
<comment type="function">
    <text evidence="1">Part of the DNA-dependent RNA polymerase which catalyzes the transcription of viral DNA into RNA using the four ribonucleoside triphosphates as substrates. Responsible for the transcription of early, intermediate and late genes. DNA-dependent RNA polymerase associates with the early transcription factor (ETF), itself composed of OPG118 and OPG134, thereby allowing the early genes transcription. Late transcription, and probably also intermediate transcription, require newly synthesized RNA polymerase.</text>
</comment>
<comment type="catalytic activity">
    <reaction evidence="1">
        <text>RNA(n) + a ribonucleoside 5'-triphosphate = RNA(n+1) + diphosphate</text>
        <dbReference type="Rhea" id="RHEA:21248"/>
        <dbReference type="Rhea" id="RHEA-COMP:14527"/>
        <dbReference type="Rhea" id="RHEA-COMP:17342"/>
        <dbReference type="ChEBI" id="CHEBI:33019"/>
        <dbReference type="ChEBI" id="CHEBI:61557"/>
        <dbReference type="ChEBI" id="CHEBI:140395"/>
        <dbReference type="EC" id="2.7.7.6"/>
    </reaction>
</comment>
<comment type="subunit">
    <text evidence="1">The DNA-dependent RNA polymerase (vRNAP) consists of eight subunits encoded by early viral genes and termed according to their apparent molecular masses Rpo147, Rpo132, Rpo35, Rpo30, Rpo22, Rpo19, Rpo18, and Rpo7. The same holoenzyme, with the addition of the transcription-specificity factor RAP94, is used for early gene expression.</text>
</comment>
<comment type="subcellular location">
    <subcellularLocation>
        <location evidence="1">Virion</location>
    </subcellularLocation>
    <subcellularLocation>
        <location evidence="1">Host cytoplasm</location>
    </subcellularLocation>
    <text evidence="1">All the enzymes and other proteins required to synthesize early mRNAs are packaged within the virion core along with the DNA genome. This is necessary because viral early mRNAs are synthesized within minutes after virus entry into the cell and are extruded through pores in the core particle.</text>
</comment>
<comment type="induction">
    <text evidence="2">Expressed in the early phase of the viral replicative cycle.</text>
</comment>
<comment type="similarity">
    <text evidence="4">Belongs to the poxviridae DNA-directed RNA polymerase 30 kDa subunit family.</text>
</comment>
<accession>A0A7H0DN39</accession>
<evidence type="ECO:0000250" key="1">
    <source>
        <dbReference type="UniProtKB" id="O57187"/>
    </source>
</evidence>
<evidence type="ECO:0000250" key="2">
    <source>
        <dbReference type="UniProtKB" id="P21603"/>
    </source>
</evidence>
<evidence type="ECO:0000256" key="3">
    <source>
        <dbReference type="SAM" id="MobiDB-lite"/>
    </source>
</evidence>
<evidence type="ECO:0000305" key="4"/>
<evidence type="ECO:0000312" key="5">
    <source>
        <dbReference type="EMBL" id="QNP12922.1"/>
    </source>
</evidence>
<evidence type="ECO:0000312" key="6">
    <source>
        <dbReference type="Proteomes" id="UP000516359"/>
    </source>
</evidence>
<keyword id="KW-0240">DNA-directed RNA polymerase</keyword>
<keyword id="KW-0244">Early protein</keyword>
<keyword id="KW-1035">Host cytoplasm</keyword>
<keyword id="KW-0479">Metal-binding</keyword>
<keyword id="KW-0548">Nucleotidyltransferase</keyword>
<keyword id="KW-1185">Reference proteome</keyword>
<keyword id="KW-0804">Transcription</keyword>
<keyword id="KW-0808">Transferase</keyword>
<keyword id="KW-0946">Virion</keyword>
<keyword id="KW-0862">Zinc</keyword>
<keyword id="KW-0863">Zinc-finger</keyword>
<reference key="1">
    <citation type="journal article" date="2022" name="J. Infect. Dis.">
        <title>Exportation of Monkeypox virus from the African continent.</title>
        <authorList>
            <person name="Mauldin M.R."/>
            <person name="McCollum A.M."/>
            <person name="Nakazawa Y.J."/>
            <person name="Mandra A."/>
            <person name="Whitehouse E.R."/>
            <person name="Davidson W."/>
            <person name="Zhao H."/>
            <person name="Gao J."/>
            <person name="Li Y."/>
            <person name="Doty J."/>
            <person name="Yinka-Ogunleye A."/>
            <person name="Akinpelu A."/>
            <person name="Aruna O."/>
            <person name="Naidoo D."/>
            <person name="Lewandowski K."/>
            <person name="Afrough B."/>
            <person name="Graham V."/>
            <person name="Aarons E."/>
            <person name="Hewson R."/>
            <person name="Vipond R."/>
            <person name="Dunning J."/>
            <person name="Chand M."/>
            <person name="Brown C."/>
            <person name="Cohen-Gihon I."/>
            <person name="Erez N."/>
            <person name="Shifman O."/>
            <person name="Israeli O."/>
            <person name="Sharon M."/>
            <person name="Schwartz E."/>
            <person name="Beth-Din A."/>
            <person name="Zvi A."/>
            <person name="Mak T.M."/>
            <person name="Ng Y.K."/>
            <person name="Cui L."/>
            <person name="Lin R.T.P."/>
            <person name="Olson V.A."/>
            <person name="Brooks T."/>
            <person name="Paran N."/>
            <person name="Ihekweazu C."/>
            <person name="Reynolds M.G."/>
        </authorList>
    </citation>
    <scope>NUCLEOTIDE SEQUENCE [LARGE SCALE GENOMIC DNA]</scope>
    <source>
        <strain>MPXV-M5312_HM12_Rivers</strain>
    </source>
</reference>
<gene>
    <name type="primary">OPG066</name>
    <name type="synonym">RPO30</name>
    <name type="ORF">MPXVgp053</name>
</gene>
<organismHost>
    <name type="scientific">Cynomys gunnisoni</name>
    <name type="common">Gunnison's prairie dog</name>
    <name type="synonym">Spermophilus gunnisoni</name>
    <dbReference type="NCBI Taxonomy" id="45479"/>
</organismHost>
<organismHost>
    <name type="scientific">Cynomys leucurus</name>
    <name type="common">White-tailed prairie dog</name>
    <dbReference type="NCBI Taxonomy" id="99825"/>
</organismHost>
<organismHost>
    <name type="scientific">Cynomys ludovicianus</name>
    <name type="common">Black-tailed prairie dog</name>
    <dbReference type="NCBI Taxonomy" id="45480"/>
</organismHost>
<organismHost>
    <name type="scientific">Cynomys mexicanus</name>
    <name type="common">Mexican prairie dog</name>
    <dbReference type="NCBI Taxonomy" id="99826"/>
</organismHost>
<organismHost>
    <name type="scientific">Cynomys parvidens</name>
    <name type="common">Utah prairie dog</name>
    <dbReference type="NCBI Taxonomy" id="99827"/>
</organismHost>
<organismHost>
    <name type="scientific">Gliridae</name>
    <name type="common">dormice</name>
    <dbReference type="NCBI Taxonomy" id="30650"/>
</organismHost>
<organismHost>
    <name type="scientific">Heliosciurus ruwenzorii</name>
    <name type="common">Ruwenzori sun squirrel</name>
    <dbReference type="NCBI Taxonomy" id="226685"/>
</organismHost>
<organismHost>
    <name type="scientific">Homo sapiens</name>
    <name type="common">Human</name>
    <dbReference type="NCBI Taxonomy" id="9606"/>
</organismHost>
<organismHost>
    <name type="scientific">Mus musculus</name>
    <name type="common">Mouse</name>
    <dbReference type="NCBI Taxonomy" id="10090"/>
</organismHost>